<sequence>QPSYDYDEEEDDRAKLRLDAR</sequence>
<accession>P14465</accession>
<evidence type="ECO:0000250" key="1">
    <source>
        <dbReference type="UniProtKB" id="E9PV24"/>
    </source>
</evidence>
<evidence type="ECO:0000250" key="2">
    <source>
        <dbReference type="UniProtKB" id="P02675"/>
    </source>
</evidence>
<evidence type="ECO:0000256" key="3">
    <source>
        <dbReference type="SAM" id="MobiDB-lite"/>
    </source>
</evidence>
<evidence type="ECO:0000269" key="4">
    <source ref="1"/>
</evidence>
<dbReference type="GO" id="GO:0005576">
    <property type="term" value="C:extracellular region"/>
    <property type="evidence" value="ECO:0007669"/>
    <property type="project" value="UniProtKB-SubCell"/>
</dbReference>
<dbReference type="GO" id="GO:0002250">
    <property type="term" value="P:adaptive immune response"/>
    <property type="evidence" value="ECO:0007669"/>
    <property type="project" value="UniProtKB-KW"/>
</dbReference>
<dbReference type="GO" id="GO:0007596">
    <property type="term" value="P:blood coagulation"/>
    <property type="evidence" value="ECO:0007669"/>
    <property type="project" value="UniProtKB-KW"/>
</dbReference>
<dbReference type="GO" id="GO:0045087">
    <property type="term" value="P:innate immune response"/>
    <property type="evidence" value="ECO:0007669"/>
    <property type="project" value="UniProtKB-KW"/>
</dbReference>
<reference key="1">
    <citation type="journal article" date="1967" name="Arch. Biochem. Biophys.">
        <title>Amino acid sequence studies on artiodacty fibrinopeptides.</title>
        <authorList>
            <person name="Mross G.A."/>
            <person name="Doolittle R.F."/>
        </authorList>
    </citation>
    <scope>PROTEIN SEQUENCE</scope>
    <scope>PYROGLUTAMATE FORMATION AT GLN-1</scope>
    <scope>SULFATION AT TYR-6</scope>
</reference>
<comment type="function">
    <text evidence="1">Cleaved by the protease thrombin to yield monomers which, together with fibrinogen alpha (FGA) and fibrinogen gamma (FGG), polymerize to form an insoluble fibrin matrix. Fibrin has a major function in hemostasis as one of the primary components of blood clots. In addition, functions during the early stages of wound repair to stabilize the lesion and guide cell migration during re-epithelialization. Was originally thought to be essential for platelet aggregation, based on in vitro studies using anticoagulated blood. However subsequent studies have shown that it is not absolutely required for thrombus formation in vivo. Enhances expression of SELP in activated platelets. Maternal fibrinogen is essential for successful pregnancy. Fibrin deposition is also associated with infection, where it protects against IFNG-mediated hemorrhage. May also facilitate the antibacterial immune response via both innate and T-cell mediated pathways.</text>
</comment>
<comment type="subunit">
    <text evidence="2">Heterohexamer; disulfide linked. Contains 2 sets of 3 non-identical chains (alpha, beta and gamma). The 2 heterotrimers are in head to head conformation with the N-termini in a small central domain (By similarity).</text>
</comment>
<comment type="subcellular location">
    <subcellularLocation>
        <location>Secreted</location>
    </subcellularLocation>
</comment>
<comment type="domain">
    <text evidence="2">A long coiled coil structure formed by 3 polypeptide chains connects the central nodule to the C-terminal domains (distal nodules). The long C-terminal ends of the alpha chains fold back, contributing a fourth strand to the coiled coil structure.</text>
</comment>
<comment type="PTM">
    <text>Conversion of fibrinogen to fibrin is triggered by thrombin, which cleaves fibrinopeptides A and B from alpha and beta chains, and thus exposes the N-terminal polymerization sites responsible for the formation of the soft clot.</text>
</comment>
<organism>
    <name type="scientific">Antilocapra americana</name>
    <name type="common">Pronghorn</name>
    <dbReference type="NCBI Taxonomy" id="9891"/>
    <lineage>
        <taxon>Eukaryota</taxon>
        <taxon>Metazoa</taxon>
        <taxon>Chordata</taxon>
        <taxon>Craniata</taxon>
        <taxon>Vertebrata</taxon>
        <taxon>Euteleostomi</taxon>
        <taxon>Mammalia</taxon>
        <taxon>Eutheria</taxon>
        <taxon>Laurasiatheria</taxon>
        <taxon>Artiodactyla</taxon>
        <taxon>Ruminantia</taxon>
        <taxon>Pecora</taxon>
        <taxon>Antilocapridae</taxon>
        <taxon>Antilocapra</taxon>
    </lineage>
</organism>
<feature type="peptide" id="PRO_0000009053" description="Fibrinopeptide B">
    <location>
        <begin position="1"/>
        <end position="21"/>
    </location>
</feature>
<feature type="region of interest" description="Disordered" evidence="3">
    <location>
        <begin position="1"/>
        <end position="21"/>
    </location>
</feature>
<feature type="compositionally biased region" description="Acidic residues" evidence="3">
    <location>
        <begin position="1"/>
        <end position="11"/>
    </location>
</feature>
<feature type="compositionally biased region" description="Basic and acidic residues" evidence="3">
    <location>
        <begin position="12"/>
        <end position="21"/>
    </location>
</feature>
<feature type="modified residue" description="Pyrrolidone carboxylic acid" evidence="4">
    <location>
        <position position="1"/>
    </location>
</feature>
<feature type="modified residue" description="Sulfotyrosine" evidence="4">
    <location>
        <position position="6"/>
    </location>
</feature>
<feature type="non-terminal residue">
    <location>
        <position position="21"/>
    </location>
</feature>
<gene>
    <name type="primary">FGB</name>
</gene>
<name>FIBB_ANTAM</name>
<proteinExistence type="evidence at protein level"/>
<protein>
    <recommendedName>
        <fullName>Fibrinogen beta chain</fullName>
    </recommendedName>
    <component>
        <recommendedName>
            <fullName>Fibrinopeptide B</fullName>
        </recommendedName>
    </component>
</protein>
<keyword id="KW-1064">Adaptive immunity</keyword>
<keyword id="KW-0094">Blood coagulation</keyword>
<keyword id="KW-0175">Coiled coil</keyword>
<keyword id="KW-0903">Direct protein sequencing</keyword>
<keyword id="KW-1015">Disulfide bond</keyword>
<keyword id="KW-0356">Hemostasis</keyword>
<keyword id="KW-0391">Immunity</keyword>
<keyword id="KW-0399">Innate immunity</keyword>
<keyword id="KW-0873">Pyrrolidone carboxylic acid</keyword>
<keyword id="KW-0964">Secreted</keyword>
<keyword id="KW-0765">Sulfation</keyword>